<evidence type="ECO:0000250" key="1">
    <source>
        <dbReference type="UniProtKB" id="Q9DAG4"/>
    </source>
</evidence>
<evidence type="ECO:0000269" key="2">
    <source>
    </source>
</evidence>
<evidence type="ECO:0000269" key="3">
    <source>
    </source>
</evidence>
<evidence type="ECO:0000303" key="4">
    <source>
    </source>
</evidence>
<evidence type="ECO:0000305" key="5"/>
<evidence type="ECO:0000312" key="6">
    <source>
        <dbReference type="HGNC" id="HGNC:26341"/>
    </source>
</evidence>
<proteinExistence type="evidence at protein level"/>
<sequence length="180" mass="20615">MAGVKYPGQDPVDLDIYQSSHMVDYQPYRKHKYSRVTPQEQAKLDAQLRDKEFYRPIPNPNPKLTDGYPAFKRPHMTAKDLGLPGFFPSQEHEATREDERKFTSTCHFTYPASHDLHLAQGDPNQVLQSADFPCLVDPKHQPAAEMAKGYLLLPGCPCLHCHIVKVPILNRWGPLMPFYQ</sequence>
<gene>
    <name evidence="6" type="primary">SPMIP9</name>
    <name type="synonym">C2orf51</name>
    <name type="synonym">TEX37</name>
    <name evidence="4" type="synonym">TSC21</name>
</gene>
<dbReference type="EMBL" id="AK058098">
    <property type="protein sequence ID" value="BAB71663.1"/>
    <property type="molecule type" value="mRNA"/>
</dbReference>
<dbReference type="EMBL" id="AC104134">
    <property type="protein sequence ID" value="AAY24330.1"/>
    <property type="molecule type" value="Genomic_DNA"/>
</dbReference>
<dbReference type="EMBL" id="CH471215">
    <property type="protein sequence ID" value="EAW77070.1"/>
    <property type="molecule type" value="Genomic_DNA"/>
</dbReference>
<dbReference type="EMBL" id="BC029522">
    <property type="protein sequence ID" value="AAH29522.1"/>
    <property type="molecule type" value="mRNA"/>
</dbReference>
<dbReference type="CCDS" id="CCDS2003.1"/>
<dbReference type="RefSeq" id="NP_689883.1">
    <property type="nucleotide sequence ID" value="NM_152670.3"/>
</dbReference>
<dbReference type="RefSeq" id="XP_005264245.3">
    <property type="nucleotide sequence ID" value="XM_005264188.4"/>
</dbReference>
<dbReference type="RefSeq" id="XP_011530993.1">
    <property type="nucleotide sequence ID" value="XM_011532691.2"/>
</dbReference>
<dbReference type="RefSeq" id="XP_011530994.1">
    <property type="nucleotide sequence ID" value="XM_011532692.3"/>
</dbReference>
<dbReference type="RefSeq" id="XP_054196938.1">
    <property type="nucleotide sequence ID" value="XM_054340963.1"/>
</dbReference>
<dbReference type="RefSeq" id="XP_054196939.1">
    <property type="nucleotide sequence ID" value="XM_054340964.1"/>
</dbReference>
<dbReference type="RefSeq" id="XP_054196940.1">
    <property type="nucleotide sequence ID" value="XM_054340965.1"/>
</dbReference>
<dbReference type="SMR" id="Q96LM6"/>
<dbReference type="BioGRID" id="128332">
    <property type="interactions" value="49"/>
</dbReference>
<dbReference type="FunCoup" id="Q96LM6">
    <property type="interactions" value="38"/>
</dbReference>
<dbReference type="IntAct" id="Q96LM6">
    <property type="interactions" value="48"/>
</dbReference>
<dbReference type="STRING" id="9606.ENSP00000307142"/>
<dbReference type="GlyGen" id="Q96LM6">
    <property type="glycosylation" value="1 site"/>
</dbReference>
<dbReference type="iPTMnet" id="Q96LM6"/>
<dbReference type="PhosphoSitePlus" id="Q96LM6"/>
<dbReference type="BioMuta" id="TEX37"/>
<dbReference type="MassIVE" id="Q96LM6"/>
<dbReference type="PaxDb" id="9606-ENSP00000307142"/>
<dbReference type="PeptideAtlas" id="Q96LM6"/>
<dbReference type="ProteomicsDB" id="77226"/>
<dbReference type="Antibodypedia" id="51969">
    <property type="antibodies" value="84 antibodies from 19 providers"/>
</dbReference>
<dbReference type="DNASU" id="200523"/>
<dbReference type="Ensembl" id="ENST00000303254.4">
    <property type="protein sequence ID" value="ENSP00000307142.3"/>
    <property type="gene ID" value="ENSG00000172073.4"/>
</dbReference>
<dbReference type="GeneID" id="200523"/>
<dbReference type="KEGG" id="hsa:200523"/>
<dbReference type="MANE-Select" id="ENST00000303254.4">
    <property type="protein sequence ID" value="ENSP00000307142.3"/>
    <property type="RefSeq nucleotide sequence ID" value="NM_152670.3"/>
    <property type="RefSeq protein sequence ID" value="NP_689883.1"/>
</dbReference>
<dbReference type="UCSC" id="uc002stb.3">
    <property type="organism name" value="human"/>
</dbReference>
<dbReference type="AGR" id="HGNC:26341"/>
<dbReference type="CTD" id="200523"/>
<dbReference type="GeneCards" id="SPMIP9"/>
<dbReference type="HGNC" id="HGNC:26341">
    <property type="gene designation" value="SPMIP9"/>
</dbReference>
<dbReference type="HPA" id="ENSG00000172073">
    <property type="expression patterns" value="Tissue enriched (testis)"/>
</dbReference>
<dbReference type="MIM" id="619676">
    <property type="type" value="gene"/>
</dbReference>
<dbReference type="neXtProt" id="NX_Q96LM6"/>
<dbReference type="OpenTargets" id="ENSG00000172073"/>
<dbReference type="PharmGKB" id="PA162379191"/>
<dbReference type="VEuPathDB" id="HostDB:ENSG00000172073"/>
<dbReference type="eggNOG" id="ENOG502T74N">
    <property type="taxonomic scope" value="Eukaryota"/>
</dbReference>
<dbReference type="GeneTree" id="ENSGT00390000012177"/>
<dbReference type="HOGENOM" id="CLU_132395_0_0_1"/>
<dbReference type="InParanoid" id="Q96LM6"/>
<dbReference type="OMA" id="SYMVDYK"/>
<dbReference type="OrthoDB" id="9514831at2759"/>
<dbReference type="PAN-GO" id="Q96LM6">
    <property type="GO annotations" value="1 GO annotation based on evolutionary models"/>
</dbReference>
<dbReference type="PhylomeDB" id="Q96LM6"/>
<dbReference type="TreeFam" id="TF337872"/>
<dbReference type="PathwayCommons" id="Q96LM6"/>
<dbReference type="SignaLink" id="Q96LM6"/>
<dbReference type="BioGRID-ORCS" id="200523">
    <property type="hits" value="13 hits in 1143 CRISPR screens"/>
</dbReference>
<dbReference type="ChiTaRS" id="TEX37">
    <property type="organism name" value="human"/>
</dbReference>
<dbReference type="GenomeRNAi" id="200523"/>
<dbReference type="Pharos" id="Q96LM6">
    <property type="development level" value="Tdark"/>
</dbReference>
<dbReference type="PRO" id="PR:Q96LM6"/>
<dbReference type="Proteomes" id="UP000005640">
    <property type="component" value="Chromosome 2"/>
</dbReference>
<dbReference type="RNAct" id="Q96LM6">
    <property type="molecule type" value="protein"/>
</dbReference>
<dbReference type="Bgee" id="ENSG00000172073">
    <property type="expression patterns" value="Expressed in right testis and 38 other cell types or tissues"/>
</dbReference>
<dbReference type="ExpressionAtlas" id="Q96LM6">
    <property type="expression patterns" value="baseline and differential"/>
</dbReference>
<dbReference type="GO" id="GO:0160111">
    <property type="term" value="C:axonemal A tubule inner sheath"/>
    <property type="evidence" value="ECO:0007669"/>
    <property type="project" value="Ensembl"/>
</dbReference>
<dbReference type="GO" id="GO:0005737">
    <property type="term" value="C:cytoplasm"/>
    <property type="evidence" value="ECO:0000314"/>
    <property type="project" value="UniProtKB"/>
</dbReference>
<dbReference type="GO" id="GO:0005634">
    <property type="term" value="C:nucleus"/>
    <property type="evidence" value="ECO:0007669"/>
    <property type="project" value="UniProtKB-SubCell"/>
</dbReference>
<dbReference type="GO" id="GO:0036126">
    <property type="term" value="C:sperm flagellum"/>
    <property type="evidence" value="ECO:0007669"/>
    <property type="project" value="Ensembl"/>
</dbReference>
<dbReference type="GO" id="GO:0030317">
    <property type="term" value="P:flagellated sperm motility"/>
    <property type="evidence" value="ECO:0007669"/>
    <property type="project" value="Ensembl"/>
</dbReference>
<dbReference type="InterPro" id="IPR029361">
    <property type="entry name" value="SPMIP9"/>
</dbReference>
<dbReference type="PANTHER" id="PTHR36882">
    <property type="entry name" value="TESTIS-EXPRESSED SEQUENCE 37 PROTEIN"/>
    <property type="match status" value="1"/>
</dbReference>
<dbReference type="PANTHER" id="PTHR36882:SF1">
    <property type="entry name" value="TESTIS-EXPRESSED SEQUENCE 37 PROTEIN"/>
    <property type="match status" value="1"/>
</dbReference>
<dbReference type="Pfam" id="PF15217">
    <property type="entry name" value="TSC21"/>
    <property type="match status" value="1"/>
</dbReference>
<organism>
    <name type="scientific">Homo sapiens</name>
    <name type="common">Human</name>
    <dbReference type="NCBI Taxonomy" id="9606"/>
    <lineage>
        <taxon>Eukaryota</taxon>
        <taxon>Metazoa</taxon>
        <taxon>Chordata</taxon>
        <taxon>Craniata</taxon>
        <taxon>Vertebrata</taxon>
        <taxon>Euteleostomi</taxon>
        <taxon>Mammalia</taxon>
        <taxon>Eutheria</taxon>
        <taxon>Euarchontoglires</taxon>
        <taxon>Primates</taxon>
        <taxon>Haplorrhini</taxon>
        <taxon>Catarrhini</taxon>
        <taxon>Hominidae</taxon>
        <taxon>Homo</taxon>
    </lineage>
</organism>
<name>SMIP9_HUMAN</name>
<accession>Q96LM6</accession>
<comment type="function">
    <text evidence="1">Microtubule inner protein (MIP) part of the dynein-decorated doublet microtubules (DMTs) in flagella axoneme.</text>
</comment>
<comment type="subunit">
    <text evidence="1">Microtubule inner protein component of sperm flagellar doublet microtubules.</text>
</comment>
<comment type="interaction">
    <interactant intactId="EBI-743976">
        <id>Q96LM6</id>
    </interactant>
    <interactant intactId="EBI-12224467">
        <id>Q9NYG5-2</id>
        <label>ANAPC11</label>
    </interactant>
    <organismsDiffer>false</organismsDiffer>
    <experiments>3</experiments>
</comment>
<comment type="interaction">
    <interactant intactId="EBI-743976">
        <id>Q96LM6</id>
    </interactant>
    <interactant intactId="EBI-8624731">
        <id>P0C7T5</id>
        <label>ATXN1L</label>
    </interactant>
    <organismsDiffer>false</organismsDiffer>
    <experiments>3</experiments>
</comment>
<comment type="interaction">
    <interactant intactId="EBI-743976">
        <id>Q96LM6</id>
    </interactant>
    <interactant intactId="EBI-11532900">
        <id>J3KQ12</id>
        <label>BSCL2</label>
    </interactant>
    <organismsDiffer>false</organismsDiffer>
    <experiments>3</experiments>
</comment>
<comment type="interaction">
    <interactant intactId="EBI-743976">
        <id>Q96LM6</id>
    </interactant>
    <interactant intactId="EBI-1383687">
        <id>Q9UQM7</id>
        <label>CAMK2A</label>
    </interactant>
    <organismsDiffer>false</organismsDiffer>
    <experiments>3</experiments>
</comment>
<comment type="interaction">
    <interactant intactId="EBI-743976">
        <id>Q96LM6</id>
    </interactant>
    <interactant intactId="EBI-10295404">
        <id>Q99895</id>
        <label>CTRC</label>
    </interactant>
    <organismsDiffer>false</organismsDiffer>
    <experiments>3</experiments>
</comment>
<comment type="interaction">
    <interactant intactId="EBI-743976">
        <id>Q96LM6</id>
    </interactant>
    <interactant intactId="EBI-3867333">
        <id>A8MQ03</id>
        <label>CYSRT1</label>
    </interactant>
    <organismsDiffer>false</organismsDiffer>
    <experiments>3</experiments>
</comment>
<comment type="interaction">
    <interactant intactId="EBI-743976">
        <id>Q96LM6</id>
    </interactant>
    <interactant intactId="EBI-724310">
        <id>Q15038</id>
        <label>DAZAP2</label>
    </interactant>
    <organismsDiffer>false</organismsDiffer>
    <experiments>9</experiments>
</comment>
<comment type="interaction">
    <interactant intactId="EBI-743976">
        <id>Q96LM6</id>
    </interactant>
    <interactant intactId="EBI-373319">
        <id>Q96C01</id>
        <label>FAM136A</label>
    </interactant>
    <organismsDiffer>false</organismsDiffer>
    <experiments>2</experiments>
</comment>
<comment type="interaction">
    <interactant intactId="EBI-743976">
        <id>Q96LM6</id>
    </interactant>
    <interactant intactId="EBI-17282008">
        <id>O60548</id>
        <label>FOXD2</label>
    </interactant>
    <organismsDiffer>false</organismsDiffer>
    <experiments>3</experiments>
</comment>
<comment type="interaction">
    <interactant intactId="EBI-743976">
        <id>Q96LM6</id>
    </interactant>
    <interactant intactId="EBI-1779423">
        <id>P31274</id>
        <label>HOXC9</label>
    </interactant>
    <organismsDiffer>false</organismsDiffer>
    <experiments>3</experiments>
</comment>
<comment type="interaction">
    <interactant intactId="EBI-743976">
        <id>Q96LM6</id>
    </interactant>
    <interactant intactId="EBI-4397613">
        <id>Q7L273</id>
        <label>KCTD9</label>
    </interactant>
    <organismsDiffer>false</organismsDiffer>
    <experiments>3</experiments>
</comment>
<comment type="interaction">
    <interactant intactId="EBI-743976">
        <id>Q96LM6</id>
    </interactant>
    <interactant intactId="EBI-9478422">
        <id>Q96G42</id>
        <label>KLHDC7B</label>
    </interactant>
    <organismsDiffer>false</organismsDiffer>
    <experiments>3</experiments>
</comment>
<comment type="interaction">
    <interactant intactId="EBI-743976">
        <id>Q96LM6</id>
    </interactant>
    <interactant intactId="EBI-358297">
        <id>O00505</id>
        <label>KPNA3</label>
    </interactant>
    <organismsDiffer>false</organismsDiffer>
    <experiments>3</experiments>
</comment>
<comment type="interaction">
    <interactant intactId="EBI-743976">
        <id>Q96LM6</id>
    </interactant>
    <interactant intactId="EBI-10176379">
        <id>P59991</id>
        <label>KRTAP12-2</label>
    </interactant>
    <organismsDiffer>false</organismsDiffer>
    <experiments>3</experiments>
</comment>
<comment type="interaction">
    <interactant intactId="EBI-743976">
        <id>Q96LM6</id>
    </interactant>
    <interactant intactId="EBI-10176396">
        <id>P60329</id>
        <label>KRTAP12-4</label>
    </interactant>
    <organismsDiffer>false</organismsDiffer>
    <experiments>3</experiments>
</comment>
<comment type="interaction">
    <interactant intactId="EBI-743976">
        <id>Q96LM6</id>
    </interactant>
    <interactant intactId="EBI-11953846">
        <id>Q52LG2</id>
        <label>KRTAP13-2</label>
    </interactant>
    <organismsDiffer>false</organismsDiffer>
    <experiments>3</experiments>
</comment>
<comment type="interaction">
    <interactant intactId="EBI-743976">
        <id>Q96LM6</id>
    </interactant>
    <interactant intactId="EBI-1048945">
        <id>Q3LI72</id>
        <label>KRTAP19-5</label>
    </interactant>
    <organismsDiffer>false</organismsDiffer>
    <experiments>3</experiments>
</comment>
<comment type="interaction">
    <interactant intactId="EBI-743976">
        <id>Q96LM6</id>
    </interactant>
    <interactant intactId="EBI-10241353">
        <id>Q3SYF9</id>
        <label>KRTAP19-7</label>
    </interactant>
    <organismsDiffer>false</organismsDiffer>
    <experiments>3</experiments>
</comment>
<comment type="interaction">
    <interactant intactId="EBI-743976">
        <id>Q96LM6</id>
    </interactant>
    <interactant intactId="EBI-10171734">
        <id>A1A580</id>
        <label>KRTAP23-1</label>
    </interactant>
    <organismsDiffer>false</organismsDiffer>
    <experiments>3</experiments>
</comment>
<comment type="interaction">
    <interactant intactId="EBI-743976">
        <id>Q96LM6</id>
    </interactant>
    <interactant intactId="EBI-3957672">
        <id>Q6PEX3</id>
        <label>KRTAP26-1</label>
    </interactant>
    <organismsDiffer>false</organismsDiffer>
    <experiments>3</experiments>
</comment>
<comment type="interaction">
    <interactant intactId="EBI-743976">
        <id>Q96LM6</id>
    </interactant>
    <interactant intactId="EBI-9996449">
        <id>Q9BYR8</id>
        <label>KRTAP3-1</label>
    </interactant>
    <organismsDiffer>false</organismsDiffer>
    <experiments>3</experiments>
</comment>
<comment type="interaction">
    <interactant intactId="EBI-743976">
        <id>Q96LM6</id>
    </interactant>
    <interactant intactId="EBI-11962084">
        <id>Q3LI66</id>
        <label>KRTAP6-2</label>
    </interactant>
    <organismsDiffer>false</organismsDiffer>
    <experiments>4</experiments>
</comment>
<comment type="interaction">
    <interactant intactId="EBI-743976">
        <id>Q96LM6</id>
    </interactant>
    <interactant intactId="EBI-740446">
        <id>P32242</id>
        <label>OTX1</label>
    </interactant>
    <organismsDiffer>false</organismsDiffer>
    <experiments>3</experiments>
</comment>
<comment type="interaction">
    <interactant intactId="EBI-743976">
        <id>Q96LM6</id>
    </interactant>
    <interactant intactId="EBI-12138495">
        <id>Q99697-2</id>
        <label>PITX2</label>
    </interactant>
    <organismsDiffer>false</organismsDiffer>
    <experiments>3</experiments>
</comment>
<comment type="interaction">
    <interactant intactId="EBI-743976">
        <id>Q96LM6</id>
    </interactant>
    <interactant intactId="EBI-12360827">
        <id>Q53SZ7</id>
        <label>PRR30</label>
    </interactant>
    <organismsDiffer>false</organismsDiffer>
    <experiments>3</experiments>
</comment>
<comment type="interaction">
    <interactant intactId="EBI-743976">
        <id>Q96LM6</id>
    </interactant>
    <interactant intactId="EBI-12123390">
        <id>Q9NWB1-5</id>
        <label>RBFOX1</label>
    </interactant>
    <organismsDiffer>false</organismsDiffer>
    <experiments>3</experiments>
</comment>
<comment type="interaction">
    <interactant intactId="EBI-743976">
        <id>Q96LM6</id>
    </interactant>
    <interactant intactId="EBI-11963050">
        <id>O43251-10</id>
        <label>RBFOX2</label>
    </interactant>
    <organismsDiffer>false</organismsDiffer>
    <experiments>3</experiments>
</comment>
<comment type="interaction">
    <interactant intactId="EBI-743976">
        <id>Q96LM6</id>
    </interactant>
    <interactant intactId="EBI-740322">
        <id>Q93062</id>
        <label>RBPMS</label>
    </interactant>
    <organismsDiffer>false</organismsDiffer>
    <experiments>4</experiments>
</comment>
<comment type="interaction">
    <interactant intactId="EBI-743976">
        <id>Q96LM6</id>
    </interactant>
    <interactant intactId="EBI-740343">
        <id>Q93062-3</id>
        <label>RBPMS</label>
    </interactant>
    <organismsDiffer>false</organismsDiffer>
    <experiments>3</experiments>
</comment>
<comment type="interaction">
    <interactant intactId="EBI-743976">
        <id>Q96LM6</id>
    </interactant>
    <interactant intactId="EBI-11987469">
        <id>Q6ZRY4</id>
        <label>RBPMS2</label>
    </interactant>
    <organismsDiffer>false</organismsDiffer>
    <experiments>3</experiments>
</comment>
<comment type="interaction">
    <interactant intactId="EBI-743976">
        <id>Q96LM6</id>
    </interactant>
    <interactant intactId="EBI-2845060">
        <id>Q7L0R7</id>
        <label>RNF44</label>
    </interactant>
    <organismsDiffer>false</organismsDiffer>
    <experiments>3</experiments>
</comment>
<comment type="interaction">
    <interactant intactId="EBI-743976">
        <id>Q96LM6</id>
    </interactant>
    <interactant intactId="EBI-9087806">
        <id>O95416</id>
        <label>SOX14</label>
    </interactant>
    <organismsDiffer>false</organismsDiffer>
    <experiments>3</experiments>
</comment>
<comment type="interaction">
    <interactant intactId="EBI-743976">
        <id>Q96LM6</id>
    </interactant>
    <interactant intactId="EBI-11952651">
        <id>Q7Z6R9</id>
        <label>TFAP2D</label>
    </interactant>
    <organismsDiffer>false</organismsDiffer>
    <experiments>3</experiments>
</comment>
<comment type="interaction">
    <interactant intactId="EBI-743976">
        <id>Q96LM6</id>
    </interactant>
    <interactant intactId="EBI-357061">
        <id>Q92734</id>
        <label>TFG</label>
    </interactant>
    <organismsDiffer>false</organismsDiffer>
    <experiments>3</experiments>
</comment>
<comment type="interaction">
    <interactant intactId="EBI-743976">
        <id>Q96LM6</id>
    </interactant>
    <interactant intactId="EBI-11741437">
        <id>Q08117-2</id>
        <label>TLE5</label>
    </interactant>
    <organismsDiffer>false</organismsDiffer>
    <experiments>3</experiments>
</comment>
<comment type="interaction">
    <interactant intactId="EBI-743976">
        <id>Q96LM6</id>
    </interactant>
    <interactant intactId="EBI-3939165">
        <id>O43711</id>
        <label>TLX3</label>
    </interactant>
    <organismsDiffer>false</organismsDiffer>
    <experiments>3</experiments>
</comment>
<comment type="interaction">
    <interactant intactId="EBI-743976">
        <id>Q96LM6</id>
    </interactant>
    <interactant intactId="EBI-358993">
        <id>Q15645</id>
        <label>TRIP13</label>
    </interactant>
    <organismsDiffer>false</organismsDiffer>
    <experiments>7</experiments>
</comment>
<comment type="interaction">
    <interactant intactId="EBI-743976">
        <id>Q96LM6</id>
    </interactant>
    <interactant intactId="EBI-2514383">
        <id>Q5T6F2</id>
        <label>UBAP2</label>
    </interactant>
    <organismsDiffer>false</organismsDiffer>
    <experiments>3</experiments>
</comment>
<comment type="interaction">
    <interactant intactId="EBI-743976">
        <id>Q96LM6</id>
    </interactant>
    <interactant intactId="EBI-2107455">
        <id>Q08AM6</id>
        <label>VAC14</label>
    </interactant>
    <organismsDiffer>false</organismsDiffer>
    <experiments>3</experiments>
</comment>
<comment type="interaction">
    <interactant intactId="EBI-743976">
        <id>Q96LM6</id>
    </interactant>
    <interactant intactId="EBI-11957216">
        <id>A8MV65-2</id>
        <label>VGLL3</label>
    </interactant>
    <organismsDiffer>false</organismsDiffer>
    <experiments>3</experiments>
</comment>
<comment type="interaction">
    <interactant intactId="EBI-743976">
        <id>Q96LM6</id>
    </interactant>
    <interactant intactId="EBI-12040603">
        <id>Q9NZC7-5</id>
        <label>WWOX</label>
    </interactant>
    <organismsDiffer>false</organismsDiffer>
    <experiments>3</experiments>
</comment>
<comment type="interaction">
    <interactant intactId="EBI-743976">
        <id>Q96LM6</id>
    </interactant>
    <interactant intactId="EBI-10188476">
        <id>A0A0C4DGF1</id>
        <label>ZBTB32</label>
    </interactant>
    <organismsDiffer>false</organismsDiffer>
    <experiments>3</experiments>
</comment>
<comment type="interaction">
    <interactant intactId="EBI-743976">
        <id>Q96LM6</id>
    </interactant>
    <interactant intactId="EBI-742550">
        <id>Q96K80</id>
        <label>ZC3H10</label>
    </interactant>
    <organismsDiffer>false</organismsDiffer>
    <experiments>3</experiments>
</comment>
<comment type="interaction">
    <interactant intactId="EBI-743976">
        <id>Q96LM6</id>
    </interactant>
    <interactant intactId="EBI-750454">
        <id>Q96EJ4</id>
    </interactant>
    <organismsDiffer>false</organismsDiffer>
    <experiments>3</experiments>
</comment>
<comment type="subcellular location">
    <subcellularLocation>
        <location evidence="1">Nucleus</location>
    </subcellularLocation>
    <subcellularLocation>
        <location evidence="3">Cytoplasm</location>
    </subcellularLocation>
    <subcellularLocation>
        <location evidence="1">Cytoplasm</location>
        <location evidence="1">Cytoskeleton</location>
        <location evidence="1">Flagellum axoneme</location>
    </subcellularLocation>
    <text evidence="3">Present in the germ cell lineage at all stages (PubMed:26168773).</text>
</comment>
<comment type="tissue specificity">
    <text evidence="2 3">Testis-specific (PubMed:17091336, PubMed:26168773). Detected in the germ cell lineage at all stages (PubMed:26168773).</text>
</comment>
<keyword id="KW-0966">Cell projection</keyword>
<keyword id="KW-0969">Cilium</keyword>
<keyword id="KW-0963">Cytoplasm</keyword>
<keyword id="KW-0206">Cytoskeleton</keyword>
<keyword id="KW-0282">Flagellum</keyword>
<keyword id="KW-0539">Nucleus</keyword>
<keyword id="KW-1267">Proteomics identification</keyword>
<keyword id="KW-1185">Reference proteome</keyword>
<protein>
    <recommendedName>
        <fullName evidence="5">Protein SPMIP9</fullName>
    </recommendedName>
    <alternativeName>
        <fullName evidence="6">Sperm microtubule inner protein 9</fullName>
    </alternativeName>
    <alternativeName>
        <fullName>Testis-expressed sequence 37 protein</fullName>
    </alternativeName>
    <alternativeName>
        <fullName evidence="4">Testis-specific conserved protein of 21 kDa</fullName>
    </alternativeName>
</protein>
<reference key="1">
    <citation type="journal article" date="2004" name="Nat. Genet.">
        <title>Complete sequencing and characterization of 21,243 full-length human cDNAs.</title>
        <authorList>
            <person name="Ota T."/>
            <person name="Suzuki Y."/>
            <person name="Nishikawa T."/>
            <person name="Otsuki T."/>
            <person name="Sugiyama T."/>
            <person name="Irie R."/>
            <person name="Wakamatsu A."/>
            <person name="Hayashi K."/>
            <person name="Sato H."/>
            <person name="Nagai K."/>
            <person name="Kimura K."/>
            <person name="Makita H."/>
            <person name="Sekine M."/>
            <person name="Obayashi M."/>
            <person name="Nishi T."/>
            <person name="Shibahara T."/>
            <person name="Tanaka T."/>
            <person name="Ishii S."/>
            <person name="Yamamoto J."/>
            <person name="Saito K."/>
            <person name="Kawai Y."/>
            <person name="Isono Y."/>
            <person name="Nakamura Y."/>
            <person name="Nagahari K."/>
            <person name="Murakami K."/>
            <person name="Yasuda T."/>
            <person name="Iwayanagi T."/>
            <person name="Wagatsuma M."/>
            <person name="Shiratori A."/>
            <person name="Sudo H."/>
            <person name="Hosoiri T."/>
            <person name="Kaku Y."/>
            <person name="Kodaira H."/>
            <person name="Kondo H."/>
            <person name="Sugawara M."/>
            <person name="Takahashi M."/>
            <person name="Kanda K."/>
            <person name="Yokoi T."/>
            <person name="Furuya T."/>
            <person name="Kikkawa E."/>
            <person name="Omura Y."/>
            <person name="Abe K."/>
            <person name="Kamihara K."/>
            <person name="Katsuta N."/>
            <person name="Sato K."/>
            <person name="Tanikawa M."/>
            <person name="Yamazaki M."/>
            <person name="Ninomiya K."/>
            <person name="Ishibashi T."/>
            <person name="Yamashita H."/>
            <person name="Murakawa K."/>
            <person name="Fujimori K."/>
            <person name="Tanai H."/>
            <person name="Kimata M."/>
            <person name="Watanabe M."/>
            <person name="Hiraoka S."/>
            <person name="Chiba Y."/>
            <person name="Ishida S."/>
            <person name="Ono Y."/>
            <person name="Takiguchi S."/>
            <person name="Watanabe S."/>
            <person name="Yosida M."/>
            <person name="Hotuta T."/>
            <person name="Kusano J."/>
            <person name="Kanehori K."/>
            <person name="Takahashi-Fujii A."/>
            <person name="Hara H."/>
            <person name="Tanase T.-O."/>
            <person name="Nomura Y."/>
            <person name="Togiya S."/>
            <person name="Komai F."/>
            <person name="Hara R."/>
            <person name="Takeuchi K."/>
            <person name="Arita M."/>
            <person name="Imose N."/>
            <person name="Musashino K."/>
            <person name="Yuuki H."/>
            <person name="Oshima A."/>
            <person name="Sasaki N."/>
            <person name="Aotsuka S."/>
            <person name="Yoshikawa Y."/>
            <person name="Matsunawa H."/>
            <person name="Ichihara T."/>
            <person name="Shiohata N."/>
            <person name="Sano S."/>
            <person name="Moriya S."/>
            <person name="Momiyama H."/>
            <person name="Satoh N."/>
            <person name="Takami S."/>
            <person name="Terashima Y."/>
            <person name="Suzuki O."/>
            <person name="Nakagawa S."/>
            <person name="Senoh A."/>
            <person name="Mizoguchi H."/>
            <person name="Goto Y."/>
            <person name="Shimizu F."/>
            <person name="Wakebe H."/>
            <person name="Hishigaki H."/>
            <person name="Watanabe T."/>
            <person name="Sugiyama A."/>
            <person name="Takemoto M."/>
            <person name="Kawakami B."/>
            <person name="Yamazaki M."/>
            <person name="Watanabe K."/>
            <person name="Kumagai A."/>
            <person name="Itakura S."/>
            <person name="Fukuzumi Y."/>
            <person name="Fujimori Y."/>
            <person name="Komiyama M."/>
            <person name="Tashiro H."/>
            <person name="Tanigami A."/>
            <person name="Fujiwara T."/>
            <person name="Ono T."/>
            <person name="Yamada K."/>
            <person name="Fujii Y."/>
            <person name="Ozaki K."/>
            <person name="Hirao M."/>
            <person name="Ohmori Y."/>
            <person name="Kawabata A."/>
            <person name="Hikiji T."/>
            <person name="Kobatake N."/>
            <person name="Inagaki H."/>
            <person name="Ikema Y."/>
            <person name="Okamoto S."/>
            <person name="Okitani R."/>
            <person name="Kawakami T."/>
            <person name="Noguchi S."/>
            <person name="Itoh T."/>
            <person name="Shigeta K."/>
            <person name="Senba T."/>
            <person name="Matsumura K."/>
            <person name="Nakajima Y."/>
            <person name="Mizuno T."/>
            <person name="Morinaga M."/>
            <person name="Sasaki M."/>
            <person name="Togashi T."/>
            <person name="Oyama M."/>
            <person name="Hata H."/>
            <person name="Watanabe M."/>
            <person name="Komatsu T."/>
            <person name="Mizushima-Sugano J."/>
            <person name="Satoh T."/>
            <person name="Shirai Y."/>
            <person name="Takahashi Y."/>
            <person name="Nakagawa K."/>
            <person name="Okumura K."/>
            <person name="Nagase T."/>
            <person name="Nomura N."/>
            <person name="Kikuchi H."/>
            <person name="Masuho Y."/>
            <person name="Yamashita R."/>
            <person name="Nakai K."/>
            <person name="Yada T."/>
            <person name="Nakamura Y."/>
            <person name="Ohara O."/>
            <person name="Isogai T."/>
            <person name="Sugano S."/>
        </authorList>
    </citation>
    <scope>NUCLEOTIDE SEQUENCE [LARGE SCALE MRNA]</scope>
    <source>
        <tissue>Testis</tissue>
    </source>
</reference>
<reference key="2">
    <citation type="journal article" date="2005" name="Nature">
        <title>Generation and annotation of the DNA sequences of human chromosomes 2 and 4.</title>
        <authorList>
            <person name="Hillier L.W."/>
            <person name="Graves T.A."/>
            <person name="Fulton R.S."/>
            <person name="Fulton L.A."/>
            <person name="Pepin K.H."/>
            <person name="Minx P."/>
            <person name="Wagner-McPherson C."/>
            <person name="Layman D."/>
            <person name="Wylie K."/>
            <person name="Sekhon M."/>
            <person name="Becker M.C."/>
            <person name="Fewell G.A."/>
            <person name="Delehaunty K.D."/>
            <person name="Miner T.L."/>
            <person name="Nash W.E."/>
            <person name="Kremitzki C."/>
            <person name="Oddy L."/>
            <person name="Du H."/>
            <person name="Sun H."/>
            <person name="Bradshaw-Cordum H."/>
            <person name="Ali J."/>
            <person name="Carter J."/>
            <person name="Cordes M."/>
            <person name="Harris A."/>
            <person name="Isak A."/>
            <person name="van Brunt A."/>
            <person name="Nguyen C."/>
            <person name="Du F."/>
            <person name="Courtney L."/>
            <person name="Kalicki J."/>
            <person name="Ozersky P."/>
            <person name="Abbott S."/>
            <person name="Armstrong J."/>
            <person name="Belter E.A."/>
            <person name="Caruso L."/>
            <person name="Cedroni M."/>
            <person name="Cotton M."/>
            <person name="Davidson T."/>
            <person name="Desai A."/>
            <person name="Elliott G."/>
            <person name="Erb T."/>
            <person name="Fronick C."/>
            <person name="Gaige T."/>
            <person name="Haakenson W."/>
            <person name="Haglund K."/>
            <person name="Holmes A."/>
            <person name="Harkins R."/>
            <person name="Kim K."/>
            <person name="Kruchowski S.S."/>
            <person name="Strong C.M."/>
            <person name="Grewal N."/>
            <person name="Goyea E."/>
            <person name="Hou S."/>
            <person name="Levy A."/>
            <person name="Martinka S."/>
            <person name="Mead K."/>
            <person name="McLellan M.D."/>
            <person name="Meyer R."/>
            <person name="Randall-Maher J."/>
            <person name="Tomlinson C."/>
            <person name="Dauphin-Kohlberg S."/>
            <person name="Kozlowicz-Reilly A."/>
            <person name="Shah N."/>
            <person name="Swearengen-Shahid S."/>
            <person name="Snider J."/>
            <person name="Strong J.T."/>
            <person name="Thompson J."/>
            <person name="Yoakum M."/>
            <person name="Leonard S."/>
            <person name="Pearman C."/>
            <person name="Trani L."/>
            <person name="Radionenko M."/>
            <person name="Waligorski J.E."/>
            <person name="Wang C."/>
            <person name="Rock S.M."/>
            <person name="Tin-Wollam A.-M."/>
            <person name="Maupin R."/>
            <person name="Latreille P."/>
            <person name="Wendl M.C."/>
            <person name="Yang S.-P."/>
            <person name="Pohl C."/>
            <person name="Wallis J.W."/>
            <person name="Spieth J."/>
            <person name="Bieri T.A."/>
            <person name="Berkowicz N."/>
            <person name="Nelson J.O."/>
            <person name="Osborne J."/>
            <person name="Ding L."/>
            <person name="Meyer R."/>
            <person name="Sabo A."/>
            <person name="Shotland Y."/>
            <person name="Sinha P."/>
            <person name="Wohldmann P.E."/>
            <person name="Cook L.L."/>
            <person name="Hickenbotham M.T."/>
            <person name="Eldred J."/>
            <person name="Williams D."/>
            <person name="Jones T.A."/>
            <person name="She X."/>
            <person name="Ciccarelli F.D."/>
            <person name="Izaurralde E."/>
            <person name="Taylor J."/>
            <person name="Schmutz J."/>
            <person name="Myers R.M."/>
            <person name="Cox D.R."/>
            <person name="Huang X."/>
            <person name="McPherson J.D."/>
            <person name="Mardis E.R."/>
            <person name="Clifton S.W."/>
            <person name="Warren W.C."/>
            <person name="Chinwalla A.T."/>
            <person name="Eddy S.R."/>
            <person name="Marra M.A."/>
            <person name="Ovcharenko I."/>
            <person name="Furey T.S."/>
            <person name="Miller W."/>
            <person name="Eichler E.E."/>
            <person name="Bork P."/>
            <person name="Suyama M."/>
            <person name="Torrents D."/>
            <person name="Waterston R.H."/>
            <person name="Wilson R.K."/>
        </authorList>
    </citation>
    <scope>NUCLEOTIDE SEQUENCE [LARGE SCALE GENOMIC DNA]</scope>
</reference>
<reference key="3">
    <citation type="submission" date="2005-07" db="EMBL/GenBank/DDBJ databases">
        <authorList>
            <person name="Mural R.J."/>
            <person name="Istrail S."/>
            <person name="Sutton G.G."/>
            <person name="Florea L."/>
            <person name="Halpern A.L."/>
            <person name="Mobarry C.M."/>
            <person name="Lippert R."/>
            <person name="Walenz B."/>
            <person name="Shatkay H."/>
            <person name="Dew I."/>
            <person name="Miller J.R."/>
            <person name="Flanigan M.J."/>
            <person name="Edwards N.J."/>
            <person name="Bolanos R."/>
            <person name="Fasulo D."/>
            <person name="Halldorsson B.V."/>
            <person name="Hannenhalli S."/>
            <person name="Turner R."/>
            <person name="Yooseph S."/>
            <person name="Lu F."/>
            <person name="Nusskern D.R."/>
            <person name="Shue B.C."/>
            <person name="Zheng X.H."/>
            <person name="Zhong F."/>
            <person name="Delcher A.L."/>
            <person name="Huson D.H."/>
            <person name="Kravitz S.A."/>
            <person name="Mouchard L."/>
            <person name="Reinert K."/>
            <person name="Remington K.A."/>
            <person name="Clark A.G."/>
            <person name="Waterman M.S."/>
            <person name="Eichler E.E."/>
            <person name="Adams M.D."/>
            <person name="Hunkapiller M.W."/>
            <person name="Myers E.W."/>
            <person name="Venter J.C."/>
        </authorList>
    </citation>
    <scope>NUCLEOTIDE SEQUENCE [LARGE SCALE GENOMIC DNA]</scope>
</reference>
<reference key="4">
    <citation type="journal article" date="2004" name="Genome Res.">
        <title>The status, quality, and expansion of the NIH full-length cDNA project: the Mammalian Gene Collection (MGC).</title>
        <authorList>
            <consortium name="The MGC Project Team"/>
        </authorList>
    </citation>
    <scope>NUCLEOTIDE SEQUENCE [LARGE SCALE MRNA]</scope>
    <source>
        <tissue>Testis</tissue>
    </source>
</reference>
<reference key="5">
    <citation type="journal article" date="2007" name="Mol. Biol. Rep.">
        <title>Identification and characteristics of a novel testis-specific gene, Tsc21, in mice and human.</title>
        <authorList>
            <person name="Yu Z."/>
            <person name="Tang A."/>
            <person name="Gui Y."/>
            <person name="Guo X."/>
            <person name="Zhu H."/>
            <person name="Long Y."/>
            <person name="Li Z."/>
            <person name="Cai Z."/>
        </authorList>
    </citation>
    <scope>TISSUE SPECIFICITY</scope>
</reference>
<reference key="6">
    <citation type="journal article" date="2015" name="J. Proteome Res.">
        <title>Human spermatozoa as a model for detecting missing proteins in the context of the chromosome-centric human proteome project.</title>
        <authorList>
            <person name="Jumeau F."/>
            <person name="Com E."/>
            <person name="Lane L."/>
            <person name="Duek P."/>
            <person name="Lagarrigue M."/>
            <person name="Lavigne R."/>
            <person name="Guillot L."/>
            <person name="Rondel K."/>
            <person name="Gateau A."/>
            <person name="Melaine N."/>
            <person name="Guevel B."/>
            <person name="Sergeant N."/>
            <person name="Mitchell V."/>
            <person name="Pineau C."/>
        </authorList>
    </citation>
    <scope>TISSUE SPECIFICITY</scope>
    <scope>SUBCELLULAR LOCATION</scope>
    <scope>IDENTIFICATION BY MASS SPECTROMETRY</scope>
</reference>
<feature type="chain" id="PRO_0000304989" description="Protein SPMIP9">
    <location>
        <begin position="1"/>
        <end position="180"/>
    </location>
</feature>
<feature type="sequence variant" id="VAR_035142" description="In dbSNP:rs35750657.">
    <original>D</original>
    <variation>N</variation>
    <location>
        <position position="24"/>
    </location>
</feature>